<dbReference type="EMBL" id="AL009126">
    <property type="protein sequence ID" value="CAB12644.1"/>
    <property type="molecule type" value="Genomic_DNA"/>
</dbReference>
<dbReference type="PIR" id="G69805">
    <property type="entry name" value="G69805"/>
</dbReference>
<dbReference type="RefSeq" id="NP_388696.1">
    <property type="nucleotide sequence ID" value="NC_000964.3"/>
</dbReference>
<dbReference type="RefSeq" id="WP_003243767.1">
    <property type="nucleotide sequence ID" value="NZ_OZ025638.1"/>
</dbReference>
<dbReference type="SMR" id="O31556"/>
<dbReference type="FunCoup" id="O31556">
    <property type="interactions" value="11"/>
</dbReference>
<dbReference type="STRING" id="224308.BSU08150"/>
<dbReference type="PaxDb" id="224308-BSU08150"/>
<dbReference type="EnsemblBacteria" id="CAB12644">
    <property type="protein sequence ID" value="CAB12644"/>
    <property type="gene ID" value="BSU_08150"/>
</dbReference>
<dbReference type="GeneID" id="939231"/>
<dbReference type="KEGG" id="bsu:BSU08150"/>
<dbReference type="PATRIC" id="fig|224308.179.peg.881"/>
<dbReference type="eggNOG" id="ENOG502ZST0">
    <property type="taxonomic scope" value="Bacteria"/>
</dbReference>
<dbReference type="InParanoid" id="O31556"/>
<dbReference type="OrthoDB" id="2912591at2"/>
<dbReference type="BioCyc" id="BSUB:BSU08150-MONOMER"/>
<dbReference type="Proteomes" id="UP000001570">
    <property type="component" value="Chromosome"/>
</dbReference>
<protein>
    <recommendedName>
        <fullName>Uncharacterized protein YfjC</fullName>
    </recommendedName>
</protein>
<sequence length="255" mass="29246">MKQFTISIEELLFCFYSEGFFEQGMALKQAYFPEIEDEQLGALFEAACRSLLAKDAAEYRNHQYRLKDEYCPFIHVLNDADYTVKLSKFNGQGAEQNVSCHVSKFGTYSHELLFDEQVHRITKMESSEGLLAKTDEFLHIIDTEDKRESIVTLTSNEFEKLLEGASDNPSYLKEFLEKHDHQEDVTRFANDLALRKGKMDTLMRLAYGKDNTPEVADMAFVLPGAHHTWLVTGITQNEFSILPAHKDVVNQIISK</sequence>
<gene>
    <name type="primary">yfjC</name>
    <name type="ordered locus">BSU08150</name>
</gene>
<proteinExistence type="predicted"/>
<organism>
    <name type="scientific">Bacillus subtilis (strain 168)</name>
    <dbReference type="NCBI Taxonomy" id="224308"/>
    <lineage>
        <taxon>Bacteria</taxon>
        <taxon>Bacillati</taxon>
        <taxon>Bacillota</taxon>
        <taxon>Bacilli</taxon>
        <taxon>Bacillales</taxon>
        <taxon>Bacillaceae</taxon>
        <taxon>Bacillus</taxon>
    </lineage>
</organism>
<feature type="chain" id="PRO_0000049527" description="Uncharacterized protein YfjC">
    <location>
        <begin position="1"/>
        <end position="255"/>
    </location>
</feature>
<reference key="1">
    <citation type="journal article" date="1997" name="Nature">
        <title>The complete genome sequence of the Gram-positive bacterium Bacillus subtilis.</title>
        <authorList>
            <person name="Kunst F."/>
            <person name="Ogasawara N."/>
            <person name="Moszer I."/>
            <person name="Albertini A.M."/>
            <person name="Alloni G."/>
            <person name="Azevedo V."/>
            <person name="Bertero M.G."/>
            <person name="Bessieres P."/>
            <person name="Bolotin A."/>
            <person name="Borchert S."/>
            <person name="Borriss R."/>
            <person name="Boursier L."/>
            <person name="Brans A."/>
            <person name="Braun M."/>
            <person name="Brignell S.C."/>
            <person name="Bron S."/>
            <person name="Brouillet S."/>
            <person name="Bruschi C.V."/>
            <person name="Caldwell B."/>
            <person name="Capuano V."/>
            <person name="Carter N.M."/>
            <person name="Choi S.-K."/>
            <person name="Codani J.-J."/>
            <person name="Connerton I.F."/>
            <person name="Cummings N.J."/>
            <person name="Daniel R.A."/>
            <person name="Denizot F."/>
            <person name="Devine K.M."/>
            <person name="Duesterhoeft A."/>
            <person name="Ehrlich S.D."/>
            <person name="Emmerson P.T."/>
            <person name="Entian K.-D."/>
            <person name="Errington J."/>
            <person name="Fabret C."/>
            <person name="Ferrari E."/>
            <person name="Foulger D."/>
            <person name="Fritz C."/>
            <person name="Fujita M."/>
            <person name="Fujita Y."/>
            <person name="Fuma S."/>
            <person name="Galizzi A."/>
            <person name="Galleron N."/>
            <person name="Ghim S.-Y."/>
            <person name="Glaser P."/>
            <person name="Goffeau A."/>
            <person name="Golightly E.J."/>
            <person name="Grandi G."/>
            <person name="Guiseppi G."/>
            <person name="Guy B.J."/>
            <person name="Haga K."/>
            <person name="Haiech J."/>
            <person name="Harwood C.R."/>
            <person name="Henaut A."/>
            <person name="Hilbert H."/>
            <person name="Holsappel S."/>
            <person name="Hosono S."/>
            <person name="Hullo M.-F."/>
            <person name="Itaya M."/>
            <person name="Jones L.-M."/>
            <person name="Joris B."/>
            <person name="Karamata D."/>
            <person name="Kasahara Y."/>
            <person name="Klaerr-Blanchard M."/>
            <person name="Klein C."/>
            <person name="Kobayashi Y."/>
            <person name="Koetter P."/>
            <person name="Koningstein G."/>
            <person name="Krogh S."/>
            <person name="Kumano M."/>
            <person name="Kurita K."/>
            <person name="Lapidus A."/>
            <person name="Lardinois S."/>
            <person name="Lauber J."/>
            <person name="Lazarevic V."/>
            <person name="Lee S.-M."/>
            <person name="Levine A."/>
            <person name="Liu H."/>
            <person name="Masuda S."/>
            <person name="Mauel C."/>
            <person name="Medigue C."/>
            <person name="Medina N."/>
            <person name="Mellado R.P."/>
            <person name="Mizuno M."/>
            <person name="Moestl D."/>
            <person name="Nakai S."/>
            <person name="Noback M."/>
            <person name="Noone D."/>
            <person name="O'Reilly M."/>
            <person name="Ogawa K."/>
            <person name="Ogiwara A."/>
            <person name="Oudega B."/>
            <person name="Park S.-H."/>
            <person name="Parro V."/>
            <person name="Pohl T.M."/>
            <person name="Portetelle D."/>
            <person name="Porwollik S."/>
            <person name="Prescott A.M."/>
            <person name="Presecan E."/>
            <person name="Pujic P."/>
            <person name="Purnelle B."/>
            <person name="Rapoport G."/>
            <person name="Rey M."/>
            <person name="Reynolds S."/>
            <person name="Rieger M."/>
            <person name="Rivolta C."/>
            <person name="Rocha E."/>
            <person name="Roche B."/>
            <person name="Rose M."/>
            <person name="Sadaie Y."/>
            <person name="Sato T."/>
            <person name="Scanlan E."/>
            <person name="Schleich S."/>
            <person name="Schroeter R."/>
            <person name="Scoffone F."/>
            <person name="Sekiguchi J."/>
            <person name="Sekowska A."/>
            <person name="Seror S.J."/>
            <person name="Serror P."/>
            <person name="Shin B.-S."/>
            <person name="Soldo B."/>
            <person name="Sorokin A."/>
            <person name="Tacconi E."/>
            <person name="Takagi T."/>
            <person name="Takahashi H."/>
            <person name="Takemaru K."/>
            <person name="Takeuchi M."/>
            <person name="Tamakoshi A."/>
            <person name="Tanaka T."/>
            <person name="Terpstra P."/>
            <person name="Tognoni A."/>
            <person name="Tosato V."/>
            <person name="Uchiyama S."/>
            <person name="Vandenbol M."/>
            <person name="Vannier F."/>
            <person name="Vassarotti A."/>
            <person name="Viari A."/>
            <person name="Wambutt R."/>
            <person name="Wedler E."/>
            <person name="Wedler H."/>
            <person name="Weitzenegger T."/>
            <person name="Winters P."/>
            <person name="Wipat A."/>
            <person name="Yamamoto H."/>
            <person name="Yamane K."/>
            <person name="Yasumoto K."/>
            <person name="Yata K."/>
            <person name="Yoshida K."/>
            <person name="Yoshikawa H.-F."/>
            <person name="Zumstein E."/>
            <person name="Yoshikawa H."/>
            <person name="Danchin A."/>
        </authorList>
    </citation>
    <scope>NUCLEOTIDE SEQUENCE [LARGE SCALE GENOMIC DNA]</scope>
    <source>
        <strain>168</strain>
    </source>
</reference>
<name>YFJC_BACSU</name>
<keyword id="KW-1185">Reference proteome</keyword>
<accession>O31556</accession>